<organism>
    <name type="scientific">Caenorhabditis elegans</name>
    <dbReference type="NCBI Taxonomy" id="6239"/>
    <lineage>
        <taxon>Eukaryota</taxon>
        <taxon>Metazoa</taxon>
        <taxon>Ecdysozoa</taxon>
        <taxon>Nematoda</taxon>
        <taxon>Chromadorea</taxon>
        <taxon>Rhabditida</taxon>
        <taxon>Rhabditina</taxon>
        <taxon>Rhabditomorpha</taxon>
        <taxon>Rhabditoidea</taxon>
        <taxon>Rhabditidae</taxon>
        <taxon>Peloderinae</taxon>
        <taxon>Caenorhabditis</taxon>
    </lineage>
</organism>
<sequence length="768" mass="83741">MHQHMLGPSTSLGGTNNSALQSSVLSEGVLLSHSQPTREEIKKNFETREGVYRSVPSAEFSRPRPLPQYHMPPGIASAAASQIAAAGSTVRVSFLNGAEKSVESPEAVAPTSSTYEHHKNEPNGARIDMVDEAQADKICFNVGKELYVFSYRGTQTETDLSRPIDKRVYKGTSPTYHAFNQESAKNGSCQLLIGFTLGQLQIIDPLEKSSSSPFSRLYNEDRYIEKTSVTCIRWLPGDSNIFLASYVSGNLYVYDQRISAASSNNNGSSQPPPWTIHKEGDKFAIHTWKGKVQRNPVTRWQIGEGSIHQFSFSGSDGKMMATVSHDGFLRIFNYHAQELLAVMKSYFGGLLTLSWSPDAKLIATGGEDDLLTVYSVAEKRVVCRGQAHKSWVSQVKFDPYLCTTEEDLENNGIAMTSTFDDVAKDFSIRSGPVPSTSADLNSGVMNATSTFSRCSLASFNTINGAPAGNSVRYRIGSVGHDTFLCLWDITEDMLNQGNIRRHRNSTIIAPMTTLEVQTNSLVGRLEDLQEVSPGGAGVNASSDSQSITNNHTTPRPEKQKKKKFTKRLGFSKFTSGSSSATSNPVGGHKIGTLMNGASVNSESSKKQNPGLISQISCCNETRMLGSKFCPGIRDVPMIEPLMCKKVSHDRLTVLEFREDCVVTACQEGYICTWGRPGRYQPKRDCINSPGTASPESGQKPSGSTSAMTSSYGYGSDALNGVPPSRSSSTYSNSEQQLRSPNITSPSYRVSAASTSVYHRPTYAWQNAN</sequence>
<evidence type="ECO:0000250" key="1">
    <source>
        <dbReference type="UniProtKB" id="Q8TBZ3"/>
    </source>
</evidence>
<evidence type="ECO:0000255" key="2"/>
<evidence type="ECO:0000256" key="3">
    <source>
        <dbReference type="SAM" id="MobiDB-lite"/>
    </source>
</evidence>
<evidence type="ECO:0000269" key="4">
    <source>
    </source>
</evidence>
<evidence type="ECO:0000269" key="5">
    <source>
    </source>
</evidence>
<evidence type="ECO:0000303" key="6">
    <source>
    </source>
</evidence>
<evidence type="ECO:0000305" key="7"/>
<evidence type="ECO:0000312" key="8">
    <source>
        <dbReference type="EMBL" id="CBO21933.1"/>
    </source>
</evidence>
<evidence type="ECO:0000312" key="9">
    <source>
        <dbReference type="WormBase" id="C08B6.7b"/>
    </source>
</evidence>
<comment type="function">
    <text evidence="4">Together with wdr-48, binds to and stimulates the activity of the deubiquitinating enzyme usp-46, leading to deubiquitination and stabilization of the glr-1 glutamate receptor.</text>
</comment>
<comment type="subunit">
    <text evidence="4">Interacts with usp-46; the interaction increases the catalytic activity of usp-46 in the presence of wdr-48.</text>
</comment>
<comment type="alternative products">
    <event type="alternative splicing"/>
    <isoform>
        <id>D9N129-1</id>
        <name evidence="5">b</name>
        <sequence type="displayed"/>
    </isoform>
    <isoform>
        <id>D9N129-2</id>
        <name evidence="5">a</name>
        <sequence type="described" ref="VSP_055505"/>
    </isoform>
</comment>
<comment type="tissue specificity">
    <text evidence="4">Expressed in several neurons in the head and tail.</text>
</comment>
<comment type="disruption phenotype">
    <text evidence="4">25% decrease in glr-1 expression in the ventral nerve cord. Changed locomotion behavior with mutants displaying decreased reversal frequencies consistent with decreased glutamergic signaling.</text>
</comment>
<reference key="1">
    <citation type="journal article" date="1998" name="Science">
        <title>Genome sequence of the nematode C. elegans: a platform for investigating biology.</title>
        <authorList>
            <consortium name="The C. elegans sequencing consortium"/>
        </authorList>
    </citation>
    <scope>NUCLEOTIDE SEQUENCE [LARGE SCALE GENOMIC DNA]</scope>
    <scope>ALTERNATIVE SPLICING</scope>
    <source>
        <strain>Bristol N2</strain>
    </source>
</reference>
<reference evidence="7" key="2">
    <citation type="journal article" date="2014" name="J. Biol. Chem.">
        <title>The WD40-repeat proteins WDR-20 and WDR-48 bind and activate the deubiquitinating enzyme USP-46 to promote the abundance of the glutamate receptor GLR-1 in the ventral nerve cord of Caenorhabditis elegans.</title>
        <authorList>
            <person name="Dahlberg C.L."/>
            <person name="Juo P."/>
        </authorList>
    </citation>
    <scope>FUNCTION</scope>
    <scope>INTERACTION WITH USP-46</scope>
    <scope>TISSUE SPECIFICITY</scope>
    <scope>DISRUPTION PHENOTYPE</scope>
</reference>
<protein>
    <recommendedName>
        <fullName evidence="1">WD repeat-containing protein 20 homolog</fullName>
    </recommendedName>
</protein>
<keyword id="KW-0025">Alternative splicing</keyword>
<keyword id="KW-1185">Reference proteome</keyword>
<keyword id="KW-0677">Repeat</keyword>
<keyword id="KW-0833">Ubl conjugation pathway</keyword>
<keyword id="KW-0853">WD repeat</keyword>
<name>WDR20_CAEEL</name>
<proteinExistence type="evidence at protein level"/>
<feature type="chain" id="PRO_0000430079" description="WD repeat-containing protein 20 homolog">
    <location>
        <begin position="1"/>
        <end position="768"/>
    </location>
</feature>
<feature type="repeat" description="WD 1" evidence="2">
    <location>
        <begin position="224"/>
        <end position="264"/>
    </location>
</feature>
<feature type="repeat" description="WD 2" evidence="2">
    <location>
        <begin position="302"/>
        <end position="342"/>
    </location>
</feature>
<feature type="repeat" description="WD 3" evidence="2">
    <location>
        <begin position="345"/>
        <end position="384"/>
    </location>
</feature>
<feature type="repeat" description="WD 4" evidence="2">
    <location>
        <begin position="454"/>
        <end position="497"/>
    </location>
</feature>
<feature type="repeat" description="WD 5" evidence="2">
    <location>
        <begin position="646"/>
        <end position="683"/>
    </location>
</feature>
<feature type="region of interest" description="Disordered" evidence="3">
    <location>
        <begin position="103"/>
        <end position="122"/>
    </location>
</feature>
<feature type="region of interest" description="Disordered" evidence="3">
    <location>
        <begin position="531"/>
        <end position="608"/>
    </location>
</feature>
<feature type="region of interest" description="Disordered" evidence="3">
    <location>
        <begin position="684"/>
        <end position="749"/>
    </location>
</feature>
<feature type="compositionally biased region" description="Polar residues" evidence="3">
    <location>
        <begin position="539"/>
        <end position="553"/>
    </location>
</feature>
<feature type="compositionally biased region" description="Low complexity" evidence="3">
    <location>
        <begin position="570"/>
        <end position="582"/>
    </location>
</feature>
<feature type="compositionally biased region" description="Polar residues" evidence="3">
    <location>
        <begin position="595"/>
        <end position="608"/>
    </location>
</feature>
<feature type="compositionally biased region" description="Polar residues" evidence="3">
    <location>
        <begin position="688"/>
        <end position="712"/>
    </location>
</feature>
<feature type="compositionally biased region" description="Low complexity" evidence="3">
    <location>
        <begin position="724"/>
        <end position="733"/>
    </location>
</feature>
<feature type="compositionally biased region" description="Polar residues" evidence="3">
    <location>
        <begin position="734"/>
        <end position="749"/>
    </location>
</feature>
<feature type="splice variant" id="VSP_055505" description="In isoform a." evidence="6">
    <original>SEQQLRSPNITSPSYRVSA</original>
    <variation>T</variation>
    <location>
        <begin position="733"/>
        <end position="751"/>
    </location>
</feature>
<gene>
    <name evidence="8 9" type="primary">wdr-20</name>
    <name type="ORF">C08B6.7</name>
</gene>
<accession>D9N129</accession>
<accession>Q17818</accession>
<dbReference type="EMBL" id="Z72502">
    <property type="protein sequence ID" value="CAA96589.1"/>
    <property type="molecule type" value="Genomic_DNA"/>
</dbReference>
<dbReference type="EMBL" id="Z72502">
    <property type="protein sequence ID" value="CBO21933.1"/>
    <property type="molecule type" value="Genomic_DNA"/>
</dbReference>
<dbReference type="RefSeq" id="NP_001256184.1">
    <property type="nucleotide sequence ID" value="NM_001269255.1"/>
</dbReference>
<dbReference type="RefSeq" id="NP_001335505.1">
    <property type="nucleotide sequence ID" value="NM_001348580.1"/>
</dbReference>
<dbReference type="RefSeq" id="NP_001370272.1">
    <molecule id="D9N129-1"/>
    <property type="nucleotide sequence ID" value="NM_001383378.1"/>
</dbReference>
<dbReference type="SMR" id="D9N129"/>
<dbReference type="BioGRID" id="44441">
    <property type="interactions" value="1"/>
</dbReference>
<dbReference type="FunCoup" id="D9N129">
    <property type="interactions" value="2534"/>
</dbReference>
<dbReference type="STRING" id="6239.C08B6.7b.1"/>
<dbReference type="PaxDb" id="6239-C08B6.7b"/>
<dbReference type="PeptideAtlas" id="D9N129"/>
<dbReference type="EnsemblMetazoa" id="C08B6.7a.1">
    <property type="protein sequence ID" value="C08B6.7a.1"/>
    <property type="gene ID" value="WBGene00007428"/>
</dbReference>
<dbReference type="EnsemblMetazoa" id="C08B6.7a.2">
    <property type="protein sequence ID" value="C08B6.7a.2"/>
    <property type="gene ID" value="WBGene00007428"/>
</dbReference>
<dbReference type="EnsemblMetazoa" id="C08B6.7b.1">
    <molecule id="D9N129-1"/>
    <property type="protein sequence ID" value="C08B6.7b.1"/>
    <property type="gene ID" value="WBGene00007428"/>
</dbReference>
<dbReference type="EnsemblMetazoa" id="C08B6.7b.2">
    <molecule id="D9N129-1"/>
    <property type="protein sequence ID" value="C08B6.7b.2"/>
    <property type="gene ID" value="WBGene00007428"/>
</dbReference>
<dbReference type="GeneID" id="179410"/>
<dbReference type="KEGG" id="cel:CELE_C08B6.7"/>
<dbReference type="UCSC" id="C08B6.7">
    <property type="organism name" value="c. elegans"/>
</dbReference>
<dbReference type="AGR" id="WB:WBGene00007428"/>
<dbReference type="CTD" id="179410"/>
<dbReference type="WormBase" id="C08B6.7a">
    <property type="protein sequence ID" value="CE51874"/>
    <property type="gene ID" value="WBGene00007428"/>
    <property type="gene designation" value="wdr-20"/>
</dbReference>
<dbReference type="WormBase" id="C08B6.7b">
    <molecule id="D9N129-1"/>
    <property type="protein sequence ID" value="CE45162"/>
    <property type="gene ID" value="WBGene00007428"/>
    <property type="gene designation" value="wdr-20"/>
</dbReference>
<dbReference type="eggNOG" id="KOG2394">
    <property type="taxonomic scope" value="Eukaryota"/>
</dbReference>
<dbReference type="GeneTree" id="ENSGT00390000007686"/>
<dbReference type="HOGENOM" id="CLU_005019_1_0_1"/>
<dbReference type="InParanoid" id="D9N129"/>
<dbReference type="OMA" id="CHDFNAN"/>
<dbReference type="OrthoDB" id="3367at2759"/>
<dbReference type="PhylomeDB" id="D9N129"/>
<dbReference type="Reactome" id="R-CEL-5689880">
    <property type="pathway name" value="Ub-specific processing proteases"/>
</dbReference>
<dbReference type="PRO" id="PR:D9N129"/>
<dbReference type="Proteomes" id="UP000001940">
    <property type="component" value="Chromosome V"/>
</dbReference>
<dbReference type="Bgee" id="WBGene00007428">
    <property type="expression patterns" value="Expressed in germ line (C elegans) and 4 other cell types or tissues"/>
</dbReference>
<dbReference type="ExpressionAtlas" id="D9N129">
    <property type="expression patterns" value="baseline and differential"/>
</dbReference>
<dbReference type="GO" id="GO:0010628">
    <property type="term" value="P:positive regulation of gene expression"/>
    <property type="evidence" value="ECO:0000314"/>
    <property type="project" value="UniProtKB"/>
</dbReference>
<dbReference type="GO" id="GO:0090326">
    <property type="term" value="P:positive regulation of locomotion involved in locomotory behavior"/>
    <property type="evidence" value="ECO:0000315"/>
    <property type="project" value="UniProtKB"/>
</dbReference>
<dbReference type="GO" id="GO:1903003">
    <property type="term" value="P:positive regulation of protein deubiquitination"/>
    <property type="evidence" value="ECO:0000353"/>
    <property type="project" value="UniProtKB"/>
</dbReference>
<dbReference type="GO" id="GO:2000010">
    <property type="term" value="P:positive regulation of protein localization to cell surface"/>
    <property type="evidence" value="ECO:0000314"/>
    <property type="project" value="UniProtKB"/>
</dbReference>
<dbReference type="Gene3D" id="2.130.10.10">
    <property type="entry name" value="YVTN repeat-like/Quinoprotein amine dehydrogenase"/>
    <property type="match status" value="2"/>
</dbReference>
<dbReference type="InterPro" id="IPR015943">
    <property type="entry name" value="WD40/YVTN_repeat-like_dom_sf"/>
</dbReference>
<dbReference type="InterPro" id="IPR036322">
    <property type="entry name" value="WD40_repeat_dom_sf"/>
</dbReference>
<dbReference type="InterPro" id="IPR001680">
    <property type="entry name" value="WD40_rpt"/>
</dbReference>
<dbReference type="InterPro" id="IPR051362">
    <property type="entry name" value="WD_repeat_creC_regulators"/>
</dbReference>
<dbReference type="PANTHER" id="PTHR14107:SF16">
    <property type="entry name" value="AT02583P"/>
    <property type="match status" value="1"/>
</dbReference>
<dbReference type="PANTHER" id="PTHR14107">
    <property type="entry name" value="WD REPEAT PROTEIN"/>
    <property type="match status" value="1"/>
</dbReference>
<dbReference type="Pfam" id="PF00400">
    <property type="entry name" value="WD40"/>
    <property type="match status" value="1"/>
</dbReference>
<dbReference type="SMART" id="SM00320">
    <property type="entry name" value="WD40"/>
    <property type="match status" value="5"/>
</dbReference>
<dbReference type="SUPFAM" id="SSF50978">
    <property type="entry name" value="WD40 repeat-like"/>
    <property type="match status" value="1"/>
</dbReference>
<dbReference type="PROSITE" id="PS00678">
    <property type="entry name" value="WD_REPEATS_1"/>
    <property type="match status" value="1"/>
</dbReference>
<dbReference type="PROSITE" id="PS50082">
    <property type="entry name" value="WD_REPEATS_2"/>
    <property type="match status" value="1"/>
</dbReference>
<dbReference type="PROSITE" id="PS50294">
    <property type="entry name" value="WD_REPEATS_REGION"/>
    <property type="match status" value="1"/>
</dbReference>